<accession>A0R5M9</accession>
<accession>I7FUF9</accession>
<reference key="1">
    <citation type="submission" date="2006-10" db="EMBL/GenBank/DDBJ databases">
        <authorList>
            <person name="Fleischmann R.D."/>
            <person name="Dodson R.J."/>
            <person name="Haft D.H."/>
            <person name="Merkel J.S."/>
            <person name="Nelson W.C."/>
            <person name="Fraser C.M."/>
        </authorList>
    </citation>
    <scope>NUCLEOTIDE SEQUENCE [LARGE SCALE GENOMIC DNA]</scope>
    <source>
        <strain>ATCC 700084 / mc(2)155</strain>
    </source>
</reference>
<reference key="2">
    <citation type="journal article" date="2007" name="Genome Biol.">
        <title>Interrupted coding sequences in Mycobacterium smegmatis: authentic mutations or sequencing errors?</title>
        <authorList>
            <person name="Deshayes C."/>
            <person name="Perrodou E."/>
            <person name="Gallien S."/>
            <person name="Euphrasie D."/>
            <person name="Schaeffer C."/>
            <person name="Van-Dorsselaer A."/>
            <person name="Poch O."/>
            <person name="Lecompte O."/>
            <person name="Reyrat J.-M."/>
        </authorList>
    </citation>
    <scope>NUCLEOTIDE SEQUENCE [LARGE SCALE GENOMIC DNA]</scope>
    <source>
        <strain>ATCC 700084 / mc(2)155</strain>
    </source>
</reference>
<reference key="3">
    <citation type="journal article" date="2009" name="Genome Res.">
        <title>Ortho-proteogenomics: multiple proteomes investigation through orthology and a new MS-based protocol.</title>
        <authorList>
            <person name="Gallien S."/>
            <person name="Perrodou E."/>
            <person name="Carapito C."/>
            <person name="Deshayes C."/>
            <person name="Reyrat J.-M."/>
            <person name="Van Dorsselaer A."/>
            <person name="Poch O."/>
            <person name="Schaeffer C."/>
            <person name="Lecompte O."/>
        </authorList>
    </citation>
    <scope>NUCLEOTIDE SEQUENCE [LARGE SCALE GENOMIC DNA]</scope>
    <source>
        <strain>ATCC 700084 / mc(2)155</strain>
    </source>
</reference>
<reference key="4">
    <citation type="journal article" date="2010" name="J. Am. Chem. Soc.">
        <title>In vitro reconstitution of Mycobacterial ergothioneine biosynthesis.</title>
        <authorList>
            <person name="Seebeck F.P."/>
        </authorList>
    </citation>
    <scope>FUNCTION</scope>
    <scope>CATALYTIC ACTIVITY</scope>
    <scope>GENE NAME</scope>
    <scope>PATHWAY</scope>
</reference>
<gene>
    <name evidence="3" type="primary">egtC</name>
    <name type="ordered locus">MSMEG_6248</name>
    <name type="ordered locus">MSMEI_6087</name>
</gene>
<sequence>MCRHVAWLGAPRSLADLVLDPPQGLLVQSYAPRRQKHGLMNADGWGAGFFDDEGVARRWRSDKPLWGDASFASVAPALRSRCVLAAVRSATIGMPIEPSASAPFSDGQWLLSHNGLVDRGVLPLTGAAESTVDSAIVAALIFSRGLDALGATIAEVGELDPNARLNILAANGSRLLATTWGDTLSVLHRPDGVVLASEPYDDDPGWSDIPDRHLVDVRDAHVVVTPL</sequence>
<proteinExistence type="evidence at protein level"/>
<feature type="chain" id="PRO_0000413649" description="Gamma-glutamyl-hercynylcysteine sulfoxide hydrolase">
    <location>
        <begin position="1"/>
        <end position="227"/>
    </location>
</feature>
<feature type="domain" description="Glutamine amidotransferase type-2" evidence="1">
    <location>
        <begin position="2"/>
        <end position="227"/>
    </location>
</feature>
<feature type="active site" description="Nucleophile" evidence="1">
    <location>
        <position position="2"/>
    </location>
</feature>
<feature type="strand" evidence="6">
    <location>
        <begin position="3"/>
        <end position="13"/>
    </location>
</feature>
<feature type="helix" evidence="6">
    <location>
        <begin position="14"/>
        <end position="18"/>
    </location>
</feature>
<feature type="helix" evidence="6">
    <location>
        <begin position="25"/>
        <end position="28"/>
    </location>
</feature>
<feature type="strand" evidence="6">
    <location>
        <begin position="45"/>
        <end position="50"/>
    </location>
</feature>
<feature type="strand" evidence="6">
    <location>
        <begin position="56"/>
        <end position="63"/>
    </location>
</feature>
<feature type="helix" evidence="6">
    <location>
        <begin position="65"/>
        <end position="67"/>
    </location>
</feature>
<feature type="helix" evidence="6">
    <location>
        <begin position="69"/>
        <end position="74"/>
    </location>
</feature>
<feature type="helix" evidence="6">
    <location>
        <begin position="75"/>
        <end position="77"/>
    </location>
</feature>
<feature type="strand" evidence="6">
    <location>
        <begin position="79"/>
        <end position="87"/>
    </location>
</feature>
<feature type="helix" evidence="6">
    <location>
        <begin position="98"/>
        <end position="100"/>
    </location>
</feature>
<feature type="strand" evidence="5">
    <location>
        <begin position="104"/>
        <end position="108"/>
    </location>
</feature>
<feature type="strand" evidence="6">
    <location>
        <begin position="110"/>
        <end position="116"/>
    </location>
</feature>
<feature type="helix" evidence="6">
    <location>
        <begin position="119"/>
        <end position="121"/>
    </location>
</feature>
<feature type="strand" evidence="6">
    <location>
        <begin position="129"/>
        <end position="132"/>
    </location>
</feature>
<feature type="helix" evidence="6">
    <location>
        <begin position="133"/>
        <end position="144"/>
    </location>
</feature>
<feature type="helix" evidence="6">
    <location>
        <begin position="146"/>
        <end position="148"/>
    </location>
</feature>
<feature type="helix" evidence="6">
    <location>
        <begin position="149"/>
        <end position="159"/>
    </location>
</feature>
<feature type="strand" evidence="6">
    <location>
        <begin position="164"/>
        <end position="170"/>
    </location>
</feature>
<feature type="strand" evidence="6">
    <location>
        <begin position="172"/>
        <end position="182"/>
    </location>
</feature>
<feature type="strand" evidence="6">
    <location>
        <begin position="185"/>
        <end position="189"/>
    </location>
</feature>
<feature type="strand" evidence="6">
    <location>
        <begin position="192"/>
        <end position="198"/>
    </location>
</feature>
<feature type="strand" evidence="6">
    <location>
        <begin position="211"/>
        <end position="218"/>
    </location>
</feature>
<feature type="strand" evidence="6">
    <location>
        <begin position="221"/>
        <end position="226"/>
    </location>
</feature>
<protein>
    <recommendedName>
        <fullName evidence="4">Gamma-glutamyl-hercynylcysteine sulfoxide hydrolase</fullName>
        <ecNumber evidence="2">3.5.1.118</ecNumber>
    </recommendedName>
    <alternativeName>
        <fullName evidence="4">Gamma-glutamyl hercynylcysteine S-oxide hydrolase</fullName>
    </alternativeName>
</protein>
<keyword id="KW-0002">3D-structure</keyword>
<keyword id="KW-0315">Glutamine amidotransferase</keyword>
<keyword id="KW-0378">Hydrolase</keyword>
<keyword id="KW-1185">Reference proteome</keyword>
<evidence type="ECO:0000255" key="1">
    <source>
        <dbReference type="PROSITE-ProRule" id="PRU00609"/>
    </source>
</evidence>
<evidence type="ECO:0000269" key="2">
    <source>
    </source>
</evidence>
<evidence type="ECO:0000303" key="3">
    <source>
    </source>
</evidence>
<evidence type="ECO:0000305" key="4">
    <source>
    </source>
</evidence>
<evidence type="ECO:0007829" key="5">
    <source>
        <dbReference type="PDB" id="4ZFJ"/>
    </source>
</evidence>
<evidence type="ECO:0007829" key="6">
    <source>
        <dbReference type="PDB" id="4ZFL"/>
    </source>
</evidence>
<dbReference type="EC" id="3.5.1.118" evidence="2"/>
<dbReference type="EMBL" id="CP000480">
    <property type="protein sequence ID" value="ABK74731.1"/>
    <property type="molecule type" value="Genomic_DNA"/>
</dbReference>
<dbReference type="EMBL" id="CP001663">
    <property type="protein sequence ID" value="AFP42518.1"/>
    <property type="molecule type" value="Genomic_DNA"/>
</dbReference>
<dbReference type="RefSeq" id="WP_011731157.1">
    <property type="nucleotide sequence ID" value="NZ_SIJM01000027.1"/>
</dbReference>
<dbReference type="RefSeq" id="YP_890467.1">
    <property type="nucleotide sequence ID" value="NC_008596.1"/>
</dbReference>
<dbReference type="PDB" id="4ZFJ">
    <property type="method" value="X-ray"/>
    <property type="resolution" value="1.75 A"/>
    <property type="chains" value="A/B/C/D/E/F/G/H/I/J/K/L=1-227"/>
</dbReference>
<dbReference type="PDB" id="4ZFK">
    <property type="method" value="X-ray"/>
    <property type="resolution" value="1.82 A"/>
    <property type="chains" value="A/B/C/D=1-227"/>
</dbReference>
<dbReference type="PDB" id="4ZFL">
    <property type="method" value="X-ray"/>
    <property type="resolution" value="1.70 A"/>
    <property type="chains" value="A/B/C/D/E/F/G/H/I/J/K/L=2-227"/>
</dbReference>
<dbReference type="PDBsum" id="4ZFJ"/>
<dbReference type="PDBsum" id="4ZFK"/>
<dbReference type="PDBsum" id="4ZFL"/>
<dbReference type="SMR" id="A0R5M9"/>
<dbReference type="STRING" id="246196.MSMEG_6248"/>
<dbReference type="PaxDb" id="246196-MSMEI_6087"/>
<dbReference type="GeneID" id="93460866"/>
<dbReference type="KEGG" id="msb:LJ00_30895"/>
<dbReference type="KEGG" id="msg:MSMEI_6087"/>
<dbReference type="KEGG" id="msm:MSMEG_6248"/>
<dbReference type="PATRIC" id="fig|246196.19.peg.6087"/>
<dbReference type="eggNOG" id="COG0121">
    <property type="taxonomic scope" value="Bacteria"/>
</dbReference>
<dbReference type="OrthoDB" id="9804310at2"/>
<dbReference type="BioCyc" id="MetaCyc:MONOMER-17986"/>
<dbReference type="BRENDA" id="3.5.1.118">
    <property type="organism ID" value="3512"/>
</dbReference>
<dbReference type="UniPathway" id="UPA01014"/>
<dbReference type="EvolutionaryTrace" id="A0R5M9"/>
<dbReference type="Proteomes" id="UP000000757">
    <property type="component" value="Chromosome"/>
</dbReference>
<dbReference type="Proteomes" id="UP000006158">
    <property type="component" value="Chromosome"/>
</dbReference>
<dbReference type="GO" id="GO:0016811">
    <property type="term" value="F:hydrolase activity, acting on carbon-nitrogen (but not peptide) bonds, in linear amides"/>
    <property type="evidence" value="ECO:0007669"/>
    <property type="project" value="UniProtKB-UniRule"/>
</dbReference>
<dbReference type="GO" id="GO:0052704">
    <property type="term" value="P:ergothioneine biosynthesis from histidine via gamma-glutamyl-hercynylcysteine sulfoxide"/>
    <property type="evidence" value="ECO:0000314"/>
    <property type="project" value="UniProtKB"/>
</dbReference>
<dbReference type="CDD" id="cd01908">
    <property type="entry name" value="YafJ"/>
    <property type="match status" value="1"/>
</dbReference>
<dbReference type="FunFam" id="3.60.20.10:FF:000080">
    <property type="entry name" value="Gamma-glutamyl-hercynylcysteine sulfoxide hydrolase"/>
    <property type="match status" value="1"/>
</dbReference>
<dbReference type="Gene3D" id="3.60.20.10">
    <property type="entry name" value="Glutamine Phosphoribosylpyrophosphate, subunit 1, domain 1"/>
    <property type="match status" value="1"/>
</dbReference>
<dbReference type="HAMAP" id="MF_02036">
    <property type="entry name" value="EgtC"/>
    <property type="match status" value="1"/>
</dbReference>
<dbReference type="InterPro" id="IPR017808">
    <property type="entry name" value="EgtC"/>
</dbReference>
<dbReference type="InterPro" id="IPR026869">
    <property type="entry name" value="EgtC-like"/>
</dbReference>
<dbReference type="InterPro" id="IPR032889">
    <property type="entry name" value="EgtC_Actinobacteria"/>
</dbReference>
<dbReference type="InterPro" id="IPR052373">
    <property type="entry name" value="Gamma-glu_amide_hydrolase"/>
</dbReference>
<dbReference type="InterPro" id="IPR017932">
    <property type="entry name" value="GATase_2_dom"/>
</dbReference>
<dbReference type="InterPro" id="IPR029055">
    <property type="entry name" value="Ntn_hydrolases_N"/>
</dbReference>
<dbReference type="NCBIfam" id="TIGR03442">
    <property type="entry name" value="ergothioneine biosynthesis protein EgtC"/>
    <property type="match status" value="1"/>
</dbReference>
<dbReference type="PANTHER" id="PTHR43187:SF2">
    <property type="entry name" value="GAMMA-GLUTAMYL-HERCYNYLCYSTEINE SULFOXIDE HYDROLASE"/>
    <property type="match status" value="1"/>
</dbReference>
<dbReference type="PANTHER" id="PTHR43187">
    <property type="entry name" value="GLUTAMINE AMIDOTRANSFERASE DUG3-RELATED"/>
    <property type="match status" value="1"/>
</dbReference>
<dbReference type="Pfam" id="PF13230">
    <property type="entry name" value="GATase_4"/>
    <property type="match status" value="1"/>
</dbReference>
<dbReference type="SUPFAM" id="SSF56235">
    <property type="entry name" value="N-terminal nucleophile aminohydrolases (Ntn hydrolases)"/>
    <property type="match status" value="1"/>
</dbReference>
<dbReference type="PROSITE" id="PS51278">
    <property type="entry name" value="GATASE_TYPE_2"/>
    <property type="match status" value="1"/>
</dbReference>
<name>EGTC_MYCS2</name>
<comment type="function">
    <text evidence="2">Catalyzes the hydrolysis of the gamma-glutamyl amide bond of hercynyl-gamma-L-glutamyl-L-cysteine sulfoxide to produce hercynylcysteine sulfoxide, a step in the biosynthesis pathway of ergothioneine.</text>
</comment>
<comment type="catalytic activity">
    <reaction evidence="2">
        <text>gamma-L-glutamyl-hercynylcysteine S-oxide + H2O = S-(hercyn-2-yl)-L-cysteine S-oxide + L-glutamate</text>
        <dbReference type="Rhea" id="RHEA:42684"/>
        <dbReference type="ChEBI" id="CHEBI:15377"/>
        <dbReference type="ChEBI" id="CHEBI:29985"/>
        <dbReference type="ChEBI" id="CHEBI:82703"/>
        <dbReference type="ChEBI" id="CHEBI:82706"/>
        <dbReference type="EC" id="3.5.1.118"/>
    </reaction>
</comment>
<comment type="pathway">
    <text evidence="4">Amino-acid biosynthesis; ergothioneine biosynthesis.</text>
</comment>
<organism>
    <name type="scientific">Mycolicibacterium smegmatis (strain ATCC 700084 / mc(2)155)</name>
    <name type="common">Mycobacterium smegmatis</name>
    <dbReference type="NCBI Taxonomy" id="246196"/>
    <lineage>
        <taxon>Bacteria</taxon>
        <taxon>Bacillati</taxon>
        <taxon>Actinomycetota</taxon>
        <taxon>Actinomycetes</taxon>
        <taxon>Mycobacteriales</taxon>
        <taxon>Mycobacteriaceae</taxon>
        <taxon>Mycolicibacterium</taxon>
    </lineage>
</organism>